<sequence>MPITTPKQKTTQRIKMRIHKGDTVQVITGKDKGKTGEVLRTLPIENRVIVQGVNIRTRHVKPTQEGESGRIVTEEASVHASNVMLYSNNKKIASRVALVVEKDGSKKRRLKKTGELID</sequence>
<accession>A2CC38</accession>
<evidence type="ECO:0000255" key="1">
    <source>
        <dbReference type="HAMAP-Rule" id="MF_01326"/>
    </source>
</evidence>
<evidence type="ECO:0000305" key="2"/>
<name>RL24_PROM3</name>
<dbReference type="EMBL" id="CP000554">
    <property type="protein sequence ID" value="ABM79048.1"/>
    <property type="molecule type" value="Genomic_DNA"/>
</dbReference>
<dbReference type="RefSeq" id="WP_011826914.1">
    <property type="nucleotide sequence ID" value="NC_008820.1"/>
</dbReference>
<dbReference type="SMR" id="A2CC38"/>
<dbReference type="STRING" id="59922.P9303_23131"/>
<dbReference type="KEGG" id="pmf:P9303_23131"/>
<dbReference type="HOGENOM" id="CLU_093315_2_3_3"/>
<dbReference type="BioCyc" id="PMAR59922:G1G80-2030-MONOMER"/>
<dbReference type="Proteomes" id="UP000002274">
    <property type="component" value="Chromosome"/>
</dbReference>
<dbReference type="GO" id="GO:1990904">
    <property type="term" value="C:ribonucleoprotein complex"/>
    <property type="evidence" value="ECO:0007669"/>
    <property type="project" value="UniProtKB-KW"/>
</dbReference>
<dbReference type="GO" id="GO:0005840">
    <property type="term" value="C:ribosome"/>
    <property type="evidence" value="ECO:0007669"/>
    <property type="project" value="UniProtKB-KW"/>
</dbReference>
<dbReference type="GO" id="GO:0019843">
    <property type="term" value="F:rRNA binding"/>
    <property type="evidence" value="ECO:0007669"/>
    <property type="project" value="UniProtKB-UniRule"/>
</dbReference>
<dbReference type="GO" id="GO:0003735">
    <property type="term" value="F:structural constituent of ribosome"/>
    <property type="evidence" value="ECO:0007669"/>
    <property type="project" value="InterPro"/>
</dbReference>
<dbReference type="GO" id="GO:0006412">
    <property type="term" value="P:translation"/>
    <property type="evidence" value="ECO:0007669"/>
    <property type="project" value="UniProtKB-UniRule"/>
</dbReference>
<dbReference type="CDD" id="cd06089">
    <property type="entry name" value="KOW_RPL26"/>
    <property type="match status" value="1"/>
</dbReference>
<dbReference type="Gene3D" id="2.30.30.30">
    <property type="match status" value="1"/>
</dbReference>
<dbReference type="HAMAP" id="MF_01326_B">
    <property type="entry name" value="Ribosomal_uL24_B"/>
    <property type="match status" value="1"/>
</dbReference>
<dbReference type="InterPro" id="IPR005824">
    <property type="entry name" value="KOW"/>
</dbReference>
<dbReference type="InterPro" id="IPR014722">
    <property type="entry name" value="Rib_uL2_dom2"/>
</dbReference>
<dbReference type="InterPro" id="IPR003256">
    <property type="entry name" value="Ribosomal_uL24"/>
</dbReference>
<dbReference type="InterPro" id="IPR005825">
    <property type="entry name" value="Ribosomal_uL24_CS"/>
</dbReference>
<dbReference type="InterPro" id="IPR041988">
    <property type="entry name" value="Ribosomal_uL24_KOW"/>
</dbReference>
<dbReference type="InterPro" id="IPR008991">
    <property type="entry name" value="Translation_prot_SH3-like_sf"/>
</dbReference>
<dbReference type="NCBIfam" id="TIGR01079">
    <property type="entry name" value="rplX_bact"/>
    <property type="match status" value="1"/>
</dbReference>
<dbReference type="PANTHER" id="PTHR12903">
    <property type="entry name" value="MITOCHONDRIAL RIBOSOMAL PROTEIN L24"/>
    <property type="match status" value="1"/>
</dbReference>
<dbReference type="Pfam" id="PF00467">
    <property type="entry name" value="KOW"/>
    <property type="match status" value="1"/>
</dbReference>
<dbReference type="Pfam" id="PF17136">
    <property type="entry name" value="ribosomal_L24"/>
    <property type="match status" value="1"/>
</dbReference>
<dbReference type="SMART" id="SM00739">
    <property type="entry name" value="KOW"/>
    <property type="match status" value="1"/>
</dbReference>
<dbReference type="SUPFAM" id="SSF50104">
    <property type="entry name" value="Translation proteins SH3-like domain"/>
    <property type="match status" value="1"/>
</dbReference>
<dbReference type="PROSITE" id="PS01108">
    <property type="entry name" value="RIBOSOMAL_L24"/>
    <property type="match status" value="1"/>
</dbReference>
<comment type="function">
    <text evidence="1">One of two assembly initiator proteins, it binds directly to the 5'-end of the 23S rRNA, where it nucleates assembly of the 50S subunit.</text>
</comment>
<comment type="function">
    <text evidence="1">One of the proteins that surrounds the polypeptide exit tunnel on the outside of the subunit.</text>
</comment>
<comment type="subunit">
    <text evidence="1">Part of the 50S ribosomal subunit.</text>
</comment>
<comment type="similarity">
    <text evidence="1">Belongs to the universal ribosomal protein uL24 family.</text>
</comment>
<protein>
    <recommendedName>
        <fullName evidence="1">Large ribosomal subunit protein uL24</fullName>
    </recommendedName>
    <alternativeName>
        <fullName evidence="2">50S ribosomal protein L24</fullName>
    </alternativeName>
</protein>
<organism>
    <name type="scientific">Prochlorococcus marinus (strain MIT 9303)</name>
    <dbReference type="NCBI Taxonomy" id="59922"/>
    <lineage>
        <taxon>Bacteria</taxon>
        <taxon>Bacillati</taxon>
        <taxon>Cyanobacteriota</taxon>
        <taxon>Cyanophyceae</taxon>
        <taxon>Synechococcales</taxon>
        <taxon>Prochlorococcaceae</taxon>
        <taxon>Prochlorococcus</taxon>
    </lineage>
</organism>
<reference key="1">
    <citation type="journal article" date="2007" name="PLoS Genet.">
        <title>Patterns and implications of gene gain and loss in the evolution of Prochlorococcus.</title>
        <authorList>
            <person name="Kettler G.C."/>
            <person name="Martiny A.C."/>
            <person name="Huang K."/>
            <person name="Zucker J."/>
            <person name="Coleman M.L."/>
            <person name="Rodrigue S."/>
            <person name="Chen F."/>
            <person name="Lapidus A."/>
            <person name="Ferriera S."/>
            <person name="Johnson J."/>
            <person name="Steglich C."/>
            <person name="Church G.M."/>
            <person name="Richardson P."/>
            <person name="Chisholm S.W."/>
        </authorList>
    </citation>
    <scope>NUCLEOTIDE SEQUENCE [LARGE SCALE GENOMIC DNA]</scope>
    <source>
        <strain>MIT 9303</strain>
    </source>
</reference>
<gene>
    <name evidence="1" type="primary">rplX</name>
    <name evidence="1" type="synonym">rpl24</name>
    <name type="ordered locus">P9303_23131</name>
</gene>
<feature type="chain" id="PRO_0000355709" description="Large ribosomal subunit protein uL24">
    <location>
        <begin position="1"/>
        <end position="118"/>
    </location>
</feature>
<keyword id="KW-0687">Ribonucleoprotein</keyword>
<keyword id="KW-0689">Ribosomal protein</keyword>
<keyword id="KW-0694">RNA-binding</keyword>
<keyword id="KW-0699">rRNA-binding</keyword>
<proteinExistence type="inferred from homology"/>